<protein>
    <recommendedName>
        <fullName>Uncharacterized protein AF_2114</fullName>
    </recommendedName>
</protein>
<feature type="signal peptide" evidence="1">
    <location>
        <begin position="1"/>
        <end position="21"/>
    </location>
</feature>
<feature type="chain" id="PRO_0000013680" description="Uncharacterized protein AF_2114">
    <location>
        <begin position="22"/>
        <end position="274"/>
    </location>
</feature>
<feature type="transmembrane region" description="Helical" evidence="1">
    <location>
        <begin position="249"/>
        <end position="266"/>
    </location>
</feature>
<sequence>MRKLTLLPLLLIITGLLTVQAAELHFQVFIKGYNGTAELGIFGENLSKVETVKNGSIISLPAGNYTLTLFALNKTFVKDLRLDSNKTVTFNLLFTNRTENLSMMRHAIVQPSLEVFEIVLITNSGGENFEGDLAIPLPEHTGLKISDSSLSFLDFSDLNGNLTLKKLIVPANSTGEVSITYRLVKPKLSLSGAENQTVLIFTTLPVTNQSNAAYRGVQQFKGVDYSVYQCKTKCVLEFKVEPEIKIDKTSAFVILTASALIFIYLFTKRGGWEK</sequence>
<organism>
    <name type="scientific">Archaeoglobus fulgidus (strain ATCC 49558 / DSM 4304 / JCM 9628 / NBRC 100126 / VC-16)</name>
    <dbReference type="NCBI Taxonomy" id="224325"/>
    <lineage>
        <taxon>Archaea</taxon>
        <taxon>Methanobacteriati</taxon>
        <taxon>Methanobacteriota</taxon>
        <taxon>Archaeoglobi</taxon>
        <taxon>Archaeoglobales</taxon>
        <taxon>Archaeoglobaceae</taxon>
        <taxon>Archaeoglobus</taxon>
    </lineage>
</organism>
<comment type="subcellular location">
    <subcellularLocation>
        <location evidence="2">Membrane</location>
        <topology evidence="2">Single-pass membrane protein</topology>
    </subcellularLocation>
</comment>
<evidence type="ECO:0000255" key="1"/>
<evidence type="ECO:0000305" key="2"/>
<accession>O28166</accession>
<gene>
    <name type="ordered locus">AF_2114</name>
</gene>
<proteinExistence type="inferred from homology"/>
<keyword id="KW-0472">Membrane</keyword>
<keyword id="KW-1185">Reference proteome</keyword>
<keyword id="KW-0732">Signal</keyword>
<keyword id="KW-0812">Transmembrane</keyword>
<keyword id="KW-1133">Transmembrane helix</keyword>
<name>Y2114_ARCFU</name>
<reference key="1">
    <citation type="journal article" date="1997" name="Nature">
        <title>The complete genome sequence of the hyperthermophilic, sulphate-reducing archaeon Archaeoglobus fulgidus.</title>
        <authorList>
            <person name="Klenk H.-P."/>
            <person name="Clayton R.A."/>
            <person name="Tomb J.-F."/>
            <person name="White O."/>
            <person name="Nelson K.E."/>
            <person name="Ketchum K.A."/>
            <person name="Dodson R.J."/>
            <person name="Gwinn M.L."/>
            <person name="Hickey E.K."/>
            <person name="Peterson J.D."/>
            <person name="Richardson D.L."/>
            <person name="Kerlavage A.R."/>
            <person name="Graham D.E."/>
            <person name="Kyrpides N.C."/>
            <person name="Fleischmann R.D."/>
            <person name="Quackenbush J."/>
            <person name="Lee N.H."/>
            <person name="Sutton G.G."/>
            <person name="Gill S.R."/>
            <person name="Kirkness E.F."/>
            <person name="Dougherty B.A."/>
            <person name="McKenney K."/>
            <person name="Adams M.D."/>
            <person name="Loftus B.J."/>
            <person name="Peterson S.N."/>
            <person name="Reich C.I."/>
            <person name="McNeil L.K."/>
            <person name="Badger J.H."/>
            <person name="Glodek A."/>
            <person name="Zhou L."/>
            <person name="Overbeek R."/>
            <person name="Gocayne J.D."/>
            <person name="Weidman J.F."/>
            <person name="McDonald L.A."/>
            <person name="Utterback T.R."/>
            <person name="Cotton M.D."/>
            <person name="Spriggs T."/>
            <person name="Artiach P."/>
            <person name="Kaine B.P."/>
            <person name="Sykes S.M."/>
            <person name="Sadow P.W."/>
            <person name="D'Andrea K.P."/>
            <person name="Bowman C."/>
            <person name="Fujii C."/>
            <person name="Garland S.A."/>
            <person name="Mason T.M."/>
            <person name="Olsen G.J."/>
            <person name="Fraser C.M."/>
            <person name="Smith H.O."/>
            <person name="Woese C.R."/>
            <person name="Venter J.C."/>
        </authorList>
    </citation>
    <scope>NUCLEOTIDE SEQUENCE [LARGE SCALE GENOMIC DNA]</scope>
    <source>
        <strain>ATCC 49558 / DSM 4304 / JCM 9628 / NBRC 100126 / VC-16</strain>
    </source>
</reference>
<dbReference type="EMBL" id="AE000782">
    <property type="protein sequence ID" value="AAB89152.1"/>
    <property type="molecule type" value="Genomic_DNA"/>
</dbReference>
<dbReference type="PIR" id="B69514">
    <property type="entry name" value="B69514"/>
</dbReference>
<dbReference type="RefSeq" id="WP_010879605.1">
    <property type="nucleotide sequence ID" value="NC_000917.1"/>
</dbReference>
<dbReference type="STRING" id="224325.AF_2114"/>
<dbReference type="PaxDb" id="224325-AF_2114"/>
<dbReference type="EnsemblBacteria" id="AAB89152">
    <property type="protein sequence ID" value="AAB89152"/>
    <property type="gene ID" value="AF_2114"/>
</dbReference>
<dbReference type="GeneID" id="1485343"/>
<dbReference type="KEGG" id="afu:AF_2114"/>
<dbReference type="eggNOG" id="arCOG12214">
    <property type="taxonomic scope" value="Archaea"/>
</dbReference>
<dbReference type="HOGENOM" id="CLU_1014110_0_0_2"/>
<dbReference type="Proteomes" id="UP000002199">
    <property type="component" value="Chromosome"/>
</dbReference>
<dbReference type="GO" id="GO:0016020">
    <property type="term" value="C:membrane"/>
    <property type="evidence" value="ECO:0007669"/>
    <property type="project" value="UniProtKB-SubCell"/>
</dbReference>